<reference key="1">
    <citation type="submission" date="2008-08" db="EMBL/GenBank/DDBJ databases">
        <title>The complete genome sequence of Thermodesulfovibrio yellowstonii strain ATCC 51303 / DSM 11347 / YP87.</title>
        <authorList>
            <person name="Dodson R.J."/>
            <person name="Durkin A.S."/>
            <person name="Wu M."/>
            <person name="Eisen J."/>
            <person name="Sutton G."/>
        </authorList>
    </citation>
    <scope>NUCLEOTIDE SEQUENCE [LARGE SCALE GENOMIC DNA]</scope>
    <source>
        <strain>ATCC 51303 / DSM 11347 / YP87</strain>
    </source>
</reference>
<protein>
    <recommendedName>
        <fullName evidence="1">Bifunctional protein GlmU</fullName>
    </recommendedName>
    <domain>
        <recommendedName>
            <fullName evidence="1">UDP-N-acetylglucosamine pyrophosphorylase</fullName>
            <ecNumber evidence="1">2.7.7.23</ecNumber>
        </recommendedName>
        <alternativeName>
            <fullName evidence="1">N-acetylglucosamine-1-phosphate uridyltransferase</fullName>
        </alternativeName>
    </domain>
    <domain>
        <recommendedName>
            <fullName evidence="1">Glucosamine-1-phosphate N-acetyltransferase</fullName>
            <ecNumber evidence="1">2.3.1.157</ecNumber>
        </recommendedName>
    </domain>
</protein>
<feature type="chain" id="PRO_1000186507" description="Bifunctional protein GlmU">
    <location>
        <begin position="1"/>
        <end position="452"/>
    </location>
</feature>
<feature type="region of interest" description="Pyrophosphorylase" evidence="1">
    <location>
        <begin position="1"/>
        <end position="225"/>
    </location>
</feature>
<feature type="region of interest" description="Linker" evidence="1">
    <location>
        <begin position="226"/>
        <end position="246"/>
    </location>
</feature>
<feature type="region of interest" description="N-acetyltransferase" evidence="1">
    <location>
        <begin position="247"/>
        <end position="452"/>
    </location>
</feature>
<feature type="active site" description="Proton acceptor" evidence="1">
    <location>
        <position position="359"/>
    </location>
</feature>
<feature type="binding site" evidence="1">
    <location>
        <begin position="6"/>
        <end position="9"/>
    </location>
    <ligand>
        <name>UDP-N-acetyl-alpha-D-glucosamine</name>
        <dbReference type="ChEBI" id="CHEBI:57705"/>
    </ligand>
</feature>
<feature type="binding site" evidence="1">
    <location>
        <position position="20"/>
    </location>
    <ligand>
        <name>UDP-N-acetyl-alpha-D-glucosamine</name>
        <dbReference type="ChEBI" id="CHEBI:57705"/>
    </ligand>
</feature>
<feature type="binding site" evidence="1">
    <location>
        <position position="71"/>
    </location>
    <ligand>
        <name>UDP-N-acetyl-alpha-D-glucosamine</name>
        <dbReference type="ChEBI" id="CHEBI:57705"/>
    </ligand>
</feature>
<feature type="binding site" evidence="1">
    <location>
        <begin position="76"/>
        <end position="77"/>
    </location>
    <ligand>
        <name>UDP-N-acetyl-alpha-D-glucosamine</name>
        <dbReference type="ChEBI" id="CHEBI:57705"/>
    </ligand>
</feature>
<feature type="binding site" evidence="1">
    <location>
        <position position="99"/>
    </location>
    <ligand>
        <name>Mg(2+)</name>
        <dbReference type="ChEBI" id="CHEBI:18420"/>
    </ligand>
</feature>
<feature type="binding site" evidence="1">
    <location>
        <position position="136"/>
    </location>
    <ligand>
        <name>UDP-N-acetyl-alpha-D-glucosamine</name>
        <dbReference type="ChEBI" id="CHEBI:57705"/>
    </ligand>
</feature>
<feature type="binding site" evidence="1">
    <location>
        <position position="151"/>
    </location>
    <ligand>
        <name>UDP-N-acetyl-alpha-D-glucosamine</name>
        <dbReference type="ChEBI" id="CHEBI:57705"/>
    </ligand>
</feature>
<feature type="binding site" evidence="1">
    <location>
        <position position="166"/>
    </location>
    <ligand>
        <name>UDP-N-acetyl-alpha-D-glucosamine</name>
        <dbReference type="ChEBI" id="CHEBI:57705"/>
    </ligand>
</feature>
<feature type="binding site" evidence="1">
    <location>
        <position position="223"/>
    </location>
    <ligand>
        <name>Mg(2+)</name>
        <dbReference type="ChEBI" id="CHEBI:18420"/>
    </ligand>
</feature>
<feature type="binding site" evidence="1">
    <location>
        <position position="223"/>
    </location>
    <ligand>
        <name>UDP-N-acetyl-alpha-D-glucosamine</name>
        <dbReference type="ChEBI" id="CHEBI:57705"/>
    </ligand>
</feature>
<feature type="binding site" evidence="1">
    <location>
        <position position="329"/>
    </location>
    <ligand>
        <name>UDP-N-acetyl-alpha-D-glucosamine</name>
        <dbReference type="ChEBI" id="CHEBI:57705"/>
    </ligand>
</feature>
<feature type="binding site" evidence="1">
    <location>
        <position position="347"/>
    </location>
    <ligand>
        <name>UDP-N-acetyl-alpha-D-glucosamine</name>
        <dbReference type="ChEBI" id="CHEBI:57705"/>
    </ligand>
</feature>
<feature type="binding site" evidence="1">
    <location>
        <position position="362"/>
    </location>
    <ligand>
        <name>UDP-N-acetyl-alpha-D-glucosamine</name>
        <dbReference type="ChEBI" id="CHEBI:57705"/>
    </ligand>
</feature>
<feature type="binding site" evidence="1">
    <location>
        <position position="373"/>
    </location>
    <ligand>
        <name>UDP-N-acetyl-alpha-D-glucosamine</name>
        <dbReference type="ChEBI" id="CHEBI:57705"/>
    </ligand>
</feature>
<feature type="binding site" evidence="1">
    <location>
        <position position="376"/>
    </location>
    <ligand>
        <name>acetyl-CoA</name>
        <dbReference type="ChEBI" id="CHEBI:57288"/>
    </ligand>
</feature>
<feature type="binding site" evidence="1">
    <location>
        <begin position="382"/>
        <end position="383"/>
    </location>
    <ligand>
        <name>acetyl-CoA</name>
        <dbReference type="ChEBI" id="CHEBI:57288"/>
    </ligand>
</feature>
<feature type="binding site" evidence="1">
    <location>
        <position position="401"/>
    </location>
    <ligand>
        <name>acetyl-CoA</name>
        <dbReference type="ChEBI" id="CHEBI:57288"/>
    </ligand>
</feature>
<feature type="binding site" evidence="1">
    <location>
        <position position="419"/>
    </location>
    <ligand>
        <name>acetyl-CoA</name>
        <dbReference type="ChEBI" id="CHEBI:57288"/>
    </ligand>
</feature>
<feature type="binding site" evidence="1">
    <location>
        <position position="436"/>
    </location>
    <ligand>
        <name>acetyl-CoA</name>
        <dbReference type="ChEBI" id="CHEBI:57288"/>
    </ligand>
</feature>
<accession>B5YHS4</accession>
<proteinExistence type="inferred from homology"/>
<evidence type="ECO:0000255" key="1">
    <source>
        <dbReference type="HAMAP-Rule" id="MF_01631"/>
    </source>
</evidence>
<dbReference type="EC" id="2.7.7.23" evidence="1"/>
<dbReference type="EC" id="2.3.1.157" evidence="1"/>
<dbReference type="EMBL" id="CP001147">
    <property type="protein sequence ID" value="ACI20764.1"/>
    <property type="molecule type" value="Genomic_DNA"/>
</dbReference>
<dbReference type="RefSeq" id="WP_012545497.1">
    <property type="nucleotide sequence ID" value="NC_011296.1"/>
</dbReference>
<dbReference type="RefSeq" id="YP_002249660.1">
    <property type="nucleotide sequence ID" value="NC_011296.1"/>
</dbReference>
<dbReference type="SMR" id="B5YHS4"/>
<dbReference type="FunCoup" id="B5YHS4">
    <property type="interactions" value="435"/>
</dbReference>
<dbReference type="STRING" id="289376.THEYE_A1870"/>
<dbReference type="EnsemblBacteria" id="ACI20764">
    <property type="protein sequence ID" value="ACI20764"/>
    <property type="gene ID" value="THEYE_A1870"/>
</dbReference>
<dbReference type="KEGG" id="tye:THEYE_A1870"/>
<dbReference type="PATRIC" id="fig|289376.4.peg.1826"/>
<dbReference type="eggNOG" id="COG1207">
    <property type="taxonomic scope" value="Bacteria"/>
</dbReference>
<dbReference type="HOGENOM" id="CLU_029499_15_2_0"/>
<dbReference type="InParanoid" id="B5YHS4"/>
<dbReference type="OrthoDB" id="9775031at2"/>
<dbReference type="UniPathway" id="UPA00113">
    <property type="reaction ID" value="UER00532"/>
</dbReference>
<dbReference type="UniPathway" id="UPA00113">
    <property type="reaction ID" value="UER00533"/>
</dbReference>
<dbReference type="UniPathway" id="UPA00973"/>
<dbReference type="Proteomes" id="UP000000718">
    <property type="component" value="Chromosome"/>
</dbReference>
<dbReference type="GO" id="GO:0005737">
    <property type="term" value="C:cytoplasm"/>
    <property type="evidence" value="ECO:0007669"/>
    <property type="project" value="UniProtKB-SubCell"/>
</dbReference>
<dbReference type="GO" id="GO:0016020">
    <property type="term" value="C:membrane"/>
    <property type="evidence" value="ECO:0007669"/>
    <property type="project" value="GOC"/>
</dbReference>
<dbReference type="GO" id="GO:0019134">
    <property type="term" value="F:glucosamine-1-phosphate N-acetyltransferase activity"/>
    <property type="evidence" value="ECO:0007669"/>
    <property type="project" value="UniProtKB-UniRule"/>
</dbReference>
<dbReference type="GO" id="GO:0000287">
    <property type="term" value="F:magnesium ion binding"/>
    <property type="evidence" value="ECO:0007669"/>
    <property type="project" value="UniProtKB-UniRule"/>
</dbReference>
<dbReference type="GO" id="GO:0003977">
    <property type="term" value="F:UDP-N-acetylglucosamine diphosphorylase activity"/>
    <property type="evidence" value="ECO:0007669"/>
    <property type="project" value="UniProtKB-UniRule"/>
</dbReference>
<dbReference type="GO" id="GO:0000902">
    <property type="term" value="P:cell morphogenesis"/>
    <property type="evidence" value="ECO:0007669"/>
    <property type="project" value="UniProtKB-UniRule"/>
</dbReference>
<dbReference type="GO" id="GO:0071555">
    <property type="term" value="P:cell wall organization"/>
    <property type="evidence" value="ECO:0007669"/>
    <property type="project" value="UniProtKB-KW"/>
</dbReference>
<dbReference type="GO" id="GO:0009245">
    <property type="term" value="P:lipid A biosynthetic process"/>
    <property type="evidence" value="ECO:0007669"/>
    <property type="project" value="UniProtKB-UniRule"/>
</dbReference>
<dbReference type="GO" id="GO:0009252">
    <property type="term" value="P:peptidoglycan biosynthetic process"/>
    <property type="evidence" value="ECO:0007669"/>
    <property type="project" value="UniProtKB-UniRule"/>
</dbReference>
<dbReference type="GO" id="GO:0008360">
    <property type="term" value="P:regulation of cell shape"/>
    <property type="evidence" value="ECO:0007669"/>
    <property type="project" value="UniProtKB-KW"/>
</dbReference>
<dbReference type="GO" id="GO:0006048">
    <property type="term" value="P:UDP-N-acetylglucosamine biosynthetic process"/>
    <property type="evidence" value="ECO:0007669"/>
    <property type="project" value="UniProtKB-UniPathway"/>
</dbReference>
<dbReference type="CDD" id="cd02540">
    <property type="entry name" value="GT2_GlmU_N_bac"/>
    <property type="match status" value="1"/>
</dbReference>
<dbReference type="CDD" id="cd03353">
    <property type="entry name" value="LbH_GlmU_C"/>
    <property type="match status" value="1"/>
</dbReference>
<dbReference type="Gene3D" id="2.160.10.10">
    <property type="entry name" value="Hexapeptide repeat proteins"/>
    <property type="match status" value="1"/>
</dbReference>
<dbReference type="Gene3D" id="3.90.550.10">
    <property type="entry name" value="Spore Coat Polysaccharide Biosynthesis Protein SpsA, Chain A"/>
    <property type="match status" value="1"/>
</dbReference>
<dbReference type="HAMAP" id="MF_01631">
    <property type="entry name" value="GlmU"/>
    <property type="match status" value="1"/>
</dbReference>
<dbReference type="InterPro" id="IPR005882">
    <property type="entry name" value="Bifunctional_GlmU"/>
</dbReference>
<dbReference type="InterPro" id="IPR050065">
    <property type="entry name" value="GlmU-like"/>
</dbReference>
<dbReference type="InterPro" id="IPR038009">
    <property type="entry name" value="GlmU_C_LbH"/>
</dbReference>
<dbReference type="InterPro" id="IPR001451">
    <property type="entry name" value="Hexapep"/>
</dbReference>
<dbReference type="InterPro" id="IPR025877">
    <property type="entry name" value="MobA-like_NTP_Trfase"/>
</dbReference>
<dbReference type="InterPro" id="IPR029044">
    <property type="entry name" value="Nucleotide-diphossugar_trans"/>
</dbReference>
<dbReference type="InterPro" id="IPR011004">
    <property type="entry name" value="Trimer_LpxA-like_sf"/>
</dbReference>
<dbReference type="NCBIfam" id="TIGR01173">
    <property type="entry name" value="glmU"/>
    <property type="match status" value="1"/>
</dbReference>
<dbReference type="PANTHER" id="PTHR43584:SF3">
    <property type="entry name" value="BIFUNCTIONAL PROTEIN GLMU"/>
    <property type="match status" value="1"/>
</dbReference>
<dbReference type="PANTHER" id="PTHR43584">
    <property type="entry name" value="NUCLEOTIDYL TRANSFERASE"/>
    <property type="match status" value="1"/>
</dbReference>
<dbReference type="Pfam" id="PF00132">
    <property type="entry name" value="Hexapep"/>
    <property type="match status" value="3"/>
</dbReference>
<dbReference type="Pfam" id="PF12804">
    <property type="entry name" value="NTP_transf_3"/>
    <property type="match status" value="1"/>
</dbReference>
<dbReference type="SUPFAM" id="SSF53448">
    <property type="entry name" value="Nucleotide-diphospho-sugar transferases"/>
    <property type="match status" value="1"/>
</dbReference>
<dbReference type="SUPFAM" id="SSF51161">
    <property type="entry name" value="Trimeric LpxA-like enzymes"/>
    <property type="match status" value="1"/>
</dbReference>
<comment type="function">
    <text evidence="1">Catalyzes the last two sequential reactions in the de novo biosynthetic pathway for UDP-N-acetylglucosamine (UDP-GlcNAc). The C-terminal domain catalyzes the transfer of acetyl group from acetyl coenzyme A to glucosamine-1-phosphate (GlcN-1-P) to produce N-acetylglucosamine-1-phosphate (GlcNAc-1-P), which is converted into UDP-GlcNAc by the transfer of uridine 5-monophosphate (from uridine 5-triphosphate), a reaction catalyzed by the N-terminal domain.</text>
</comment>
<comment type="catalytic activity">
    <reaction evidence="1">
        <text>alpha-D-glucosamine 1-phosphate + acetyl-CoA = N-acetyl-alpha-D-glucosamine 1-phosphate + CoA + H(+)</text>
        <dbReference type="Rhea" id="RHEA:13725"/>
        <dbReference type="ChEBI" id="CHEBI:15378"/>
        <dbReference type="ChEBI" id="CHEBI:57287"/>
        <dbReference type="ChEBI" id="CHEBI:57288"/>
        <dbReference type="ChEBI" id="CHEBI:57776"/>
        <dbReference type="ChEBI" id="CHEBI:58516"/>
        <dbReference type="EC" id="2.3.1.157"/>
    </reaction>
</comment>
<comment type="catalytic activity">
    <reaction evidence="1">
        <text>N-acetyl-alpha-D-glucosamine 1-phosphate + UTP + H(+) = UDP-N-acetyl-alpha-D-glucosamine + diphosphate</text>
        <dbReference type="Rhea" id="RHEA:13509"/>
        <dbReference type="ChEBI" id="CHEBI:15378"/>
        <dbReference type="ChEBI" id="CHEBI:33019"/>
        <dbReference type="ChEBI" id="CHEBI:46398"/>
        <dbReference type="ChEBI" id="CHEBI:57705"/>
        <dbReference type="ChEBI" id="CHEBI:57776"/>
        <dbReference type="EC" id="2.7.7.23"/>
    </reaction>
</comment>
<comment type="cofactor">
    <cofactor evidence="1">
        <name>Mg(2+)</name>
        <dbReference type="ChEBI" id="CHEBI:18420"/>
    </cofactor>
    <text evidence="1">Binds 1 Mg(2+) ion per subunit.</text>
</comment>
<comment type="pathway">
    <text evidence="1">Nucleotide-sugar biosynthesis; UDP-N-acetyl-alpha-D-glucosamine biosynthesis; N-acetyl-alpha-D-glucosamine 1-phosphate from alpha-D-glucosamine 6-phosphate (route II): step 2/2.</text>
</comment>
<comment type="pathway">
    <text evidence="1">Nucleotide-sugar biosynthesis; UDP-N-acetyl-alpha-D-glucosamine biosynthesis; UDP-N-acetyl-alpha-D-glucosamine from N-acetyl-alpha-D-glucosamine 1-phosphate: step 1/1.</text>
</comment>
<comment type="pathway">
    <text evidence="1">Bacterial outer membrane biogenesis; LPS lipid A biosynthesis.</text>
</comment>
<comment type="subunit">
    <text evidence="1">Homotrimer.</text>
</comment>
<comment type="subcellular location">
    <subcellularLocation>
        <location evidence="1">Cytoplasm</location>
    </subcellularLocation>
</comment>
<comment type="similarity">
    <text evidence="1">In the N-terminal section; belongs to the N-acetylglucosamine-1-phosphate uridyltransferase family.</text>
</comment>
<comment type="similarity">
    <text evidence="1">In the C-terminal section; belongs to the transferase hexapeptide repeat family.</text>
</comment>
<sequence length="452" mass="50222">MDVVILAAGLGTRMKSSKPKVLHRILEKPIIDYVIDCAKSLNPFNSFVVINPSLKEVAEHLEKYNIKIVFQDEPKGTAHALLSALPYLSSDKILILNGDTPLLRKETLDSFIELFNKNGLDMALLSFYPQREHSYGRILRDGEQKIKKIVEITDFKDELMLSSEANSGIYILKREVAELVKEIKQNPNKGEFYLTDIVEIAVNKGFNIEAYPLAEENELIGINTRAELSLAMRYLRDRIVKGWMEKGITFYDPALVWISPSVTIGQDTIIYPNVFLEGDTKIGQNCLICQGVRIKNSIIEDNVQINDCTVIENSHIKSASKIGPFAHLRPDSIIGKGCRIGNFVEVKNSTIGDGTKAAHLSYIGDSEIGNNVNIGAGTITCNYDGQKKHKTIIEDNVFIGSDTQLVAPVKICKGAYIGAGSTITKEVPEDSLAISRTPQKNILGWAKKKRKQ</sequence>
<keyword id="KW-0012">Acyltransferase</keyword>
<keyword id="KW-0133">Cell shape</keyword>
<keyword id="KW-0961">Cell wall biogenesis/degradation</keyword>
<keyword id="KW-0963">Cytoplasm</keyword>
<keyword id="KW-0460">Magnesium</keyword>
<keyword id="KW-0479">Metal-binding</keyword>
<keyword id="KW-0511">Multifunctional enzyme</keyword>
<keyword id="KW-0548">Nucleotidyltransferase</keyword>
<keyword id="KW-0573">Peptidoglycan synthesis</keyword>
<keyword id="KW-1185">Reference proteome</keyword>
<keyword id="KW-0677">Repeat</keyword>
<keyword id="KW-0808">Transferase</keyword>
<name>GLMU_THEYD</name>
<organism>
    <name type="scientific">Thermodesulfovibrio yellowstonii (strain ATCC 51303 / DSM 11347 / YP87)</name>
    <dbReference type="NCBI Taxonomy" id="289376"/>
    <lineage>
        <taxon>Bacteria</taxon>
        <taxon>Pseudomonadati</taxon>
        <taxon>Nitrospirota</taxon>
        <taxon>Thermodesulfovibrionia</taxon>
        <taxon>Thermodesulfovibrionales</taxon>
        <taxon>Thermodesulfovibrionaceae</taxon>
        <taxon>Thermodesulfovibrio</taxon>
    </lineage>
</organism>
<gene>
    <name evidence="1" type="primary">glmU</name>
    <name type="ordered locus">THEYE_A1870</name>
</gene>